<dbReference type="EC" id="4.2.2.2"/>
<dbReference type="EMBL" id="AB024028">
    <property type="protein sequence ID" value="BAA95715.1"/>
    <property type="status" value="ALT_SEQ"/>
    <property type="molecule type" value="Genomic_DNA"/>
</dbReference>
<dbReference type="EMBL" id="CP002686">
    <property type="protein sequence ID" value="AEE77312.1"/>
    <property type="molecule type" value="Genomic_DNA"/>
</dbReference>
<dbReference type="RefSeq" id="NP_189376.1">
    <property type="nucleotide sequence ID" value="NM_113655.2"/>
</dbReference>
<dbReference type="SMR" id="Q9LTZ0"/>
<dbReference type="FunCoup" id="Q9LTZ0">
    <property type="interactions" value="107"/>
</dbReference>
<dbReference type="STRING" id="3702.Q9LTZ0"/>
<dbReference type="CAZy" id="PL1">
    <property type="family name" value="Polysaccharide Lyase Family 1"/>
</dbReference>
<dbReference type="PaxDb" id="3702-AT3G27400.1"/>
<dbReference type="ProteomicsDB" id="236577"/>
<dbReference type="EnsemblPlants" id="AT3G27400.1">
    <property type="protein sequence ID" value="AT3G27400.1"/>
    <property type="gene ID" value="AT3G27400"/>
</dbReference>
<dbReference type="GeneID" id="822361"/>
<dbReference type="Gramene" id="AT3G27400.1">
    <property type="protein sequence ID" value="AT3G27400.1"/>
    <property type="gene ID" value="AT3G27400"/>
</dbReference>
<dbReference type="KEGG" id="ath:AT3G27400"/>
<dbReference type="Araport" id="AT3G27400"/>
<dbReference type="TAIR" id="AT3G27400">
    <property type="gene designation" value="PLL18"/>
</dbReference>
<dbReference type="eggNOG" id="ENOG502QVCJ">
    <property type="taxonomic scope" value="Eukaryota"/>
</dbReference>
<dbReference type="HOGENOM" id="CLU_026608_0_1_1"/>
<dbReference type="InParanoid" id="Q9LTZ0"/>
<dbReference type="OMA" id="IHYETNI"/>
<dbReference type="UniPathway" id="UPA00545">
    <property type="reaction ID" value="UER00824"/>
</dbReference>
<dbReference type="CD-CODE" id="4299E36E">
    <property type="entry name" value="Nucleolus"/>
</dbReference>
<dbReference type="PRO" id="PR:Q9LTZ0"/>
<dbReference type="Proteomes" id="UP000006548">
    <property type="component" value="Chromosome 3"/>
</dbReference>
<dbReference type="ExpressionAtlas" id="Q9LTZ0">
    <property type="expression patterns" value="baseline and differential"/>
</dbReference>
<dbReference type="GO" id="GO:0005829">
    <property type="term" value="C:cytosol"/>
    <property type="evidence" value="ECO:0007005"/>
    <property type="project" value="TAIR"/>
</dbReference>
<dbReference type="GO" id="GO:0046872">
    <property type="term" value="F:metal ion binding"/>
    <property type="evidence" value="ECO:0007669"/>
    <property type="project" value="UniProtKB-KW"/>
</dbReference>
<dbReference type="GO" id="GO:0030570">
    <property type="term" value="F:pectate lyase activity"/>
    <property type="evidence" value="ECO:0007669"/>
    <property type="project" value="UniProtKB-EC"/>
</dbReference>
<dbReference type="GO" id="GO:0045490">
    <property type="term" value="P:pectin catabolic process"/>
    <property type="evidence" value="ECO:0007669"/>
    <property type="project" value="UniProtKB-UniPathway"/>
</dbReference>
<dbReference type="GO" id="GO:0009624">
    <property type="term" value="P:response to nematode"/>
    <property type="evidence" value="ECO:0000315"/>
    <property type="project" value="TAIR"/>
</dbReference>
<dbReference type="FunFam" id="2.160.20.10:FF:000009">
    <property type="entry name" value="Pectate lyase"/>
    <property type="match status" value="1"/>
</dbReference>
<dbReference type="Gene3D" id="2.160.20.10">
    <property type="entry name" value="Single-stranded right-handed beta-helix, Pectin lyase-like"/>
    <property type="match status" value="1"/>
</dbReference>
<dbReference type="InterPro" id="IPR018082">
    <property type="entry name" value="AmbAllergen"/>
</dbReference>
<dbReference type="InterPro" id="IPR002022">
    <property type="entry name" value="Pec_lyase"/>
</dbReference>
<dbReference type="InterPro" id="IPR012334">
    <property type="entry name" value="Pectin_lyas_fold"/>
</dbReference>
<dbReference type="InterPro" id="IPR011050">
    <property type="entry name" value="Pectin_lyase_fold/virulence"/>
</dbReference>
<dbReference type="InterPro" id="IPR045032">
    <property type="entry name" value="PEL"/>
</dbReference>
<dbReference type="PANTHER" id="PTHR31683:SF29">
    <property type="entry name" value="PECTATE LYASE 11-RELATED"/>
    <property type="match status" value="1"/>
</dbReference>
<dbReference type="PANTHER" id="PTHR31683">
    <property type="entry name" value="PECTATE LYASE 18-RELATED"/>
    <property type="match status" value="1"/>
</dbReference>
<dbReference type="Pfam" id="PF00544">
    <property type="entry name" value="Pectate_lyase_4"/>
    <property type="match status" value="1"/>
</dbReference>
<dbReference type="PRINTS" id="PR00807">
    <property type="entry name" value="AMBALLERGEN"/>
</dbReference>
<dbReference type="SMART" id="SM00656">
    <property type="entry name" value="Amb_all"/>
    <property type="match status" value="1"/>
</dbReference>
<dbReference type="SUPFAM" id="SSF51126">
    <property type="entry name" value="Pectin lyase-like"/>
    <property type="match status" value="1"/>
</dbReference>
<accession>Q9LTZ0</accession>
<accession>F4IWH8</accession>
<proteinExistence type="inferred from homology"/>
<evidence type="ECO:0000250" key="1"/>
<evidence type="ECO:0000255" key="2"/>
<evidence type="ECO:0000305" key="3"/>
<keyword id="KW-0106">Calcium</keyword>
<keyword id="KW-0456">Lyase</keyword>
<keyword id="KW-0479">Metal-binding</keyword>
<keyword id="KW-1185">Reference proteome</keyword>
<keyword id="KW-0732">Signal</keyword>
<comment type="catalytic activity">
    <reaction>
        <text>Eliminative cleavage of (1-&gt;4)-alpha-D-galacturonan to give oligosaccharides with 4-deoxy-alpha-D-galact-4-enuronosyl groups at their non-reducing ends.</text>
        <dbReference type="EC" id="4.2.2.2"/>
    </reaction>
</comment>
<comment type="cofactor">
    <cofactor evidence="1">
        <name>Ca(2+)</name>
        <dbReference type="ChEBI" id="CHEBI:29108"/>
    </cofactor>
    <text evidence="1">Binds 1 Ca(2+) ion. Required for its activity.</text>
</comment>
<comment type="pathway">
    <text>Glycan metabolism; pectin degradation; 2-dehydro-3-deoxy-D-gluconate from pectin: step 2/5.</text>
</comment>
<comment type="similarity">
    <text evidence="3">Belongs to the polysaccharide lyase 1 family.</text>
</comment>
<comment type="sequence caution" evidence="3">
    <conflict type="erroneous gene model prediction">
        <sequence resource="EMBL-CDS" id="BAA95715"/>
    </conflict>
</comment>
<protein>
    <recommendedName>
        <fullName>Putative pectate lyase 11</fullName>
        <ecNumber>4.2.2.2</ecNumber>
    </recommendedName>
</protein>
<reference key="1">
    <citation type="journal article" date="2000" name="DNA Res.">
        <title>Structural analysis of Arabidopsis thaliana chromosome 3. I. Sequence features of the regions of 4,504,864 bp covered by sixty P1 and TAC clones.</title>
        <authorList>
            <person name="Sato S."/>
            <person name="Nakamura Y."/>
            <person name="Kaneko T."/>
            <person name="Katoh T."/>
            <person name="Asamizu E."/>
            <person name="Tabata S."/>
        </authorList>
    </citation>
    <scope>NUCLEOTIDE SEQUENCE [LARGE SCALE GENOMIC DNA]</scope>
    <source>
        <strain>cv. Columbia</strain>
    </source>
</reference>
<reference key="2">
    <citation type="journal article" date="2017" name="Plant J.">
        <title>Araport11: a complete reannotation of the Arabidopsis thaliana reference genome.</title>
        <authorList>
            <person name="Cheng C.Y."/>
            <person name="Krishnakumar V."/>
            <person name="Chan A.P."/>
            <person name="Thibaud-Nissen F."/>
            <person name="Schobel S."/>
            <person name="Town C.D."/>
        </authorList>
    </citation>
    <scope>GENOME REANNOTATION</scope>
    <source>
        <strain>cv. Columbia</strain>
    </source>
</reference>
<gene>
    <name type="ordered locus">At3g27400</name>
    <name type="ORF">K1G2.11</name>
</gene>
<feature type="signal peptide" evidence="2">
    <location>
        <begin position="1"/>
        <end position="24"/>
    </location>
</feature>
<feature type="chain" id="PRO_0000024875" description="Putative pectate lyase 11">
    <location>
        <begin position="25"/>
        <end position="412"/>
    </location>
</feature>
<feature type="active site" evidence="2">
    <location>
        <position position="290"/>
    </location>
</feature>
<feature type="binding site" evidence="1">
    <location>
        <position position="210"/>
    </location>
    <ligand>
        <name>Ca(2+)</name>
        <dbReference type="ChEBI" id="CHEBI:29108"/>
    </ligand>
</feature>
<feature type="binding site" evidence="1">
    <location>
        <position position="234"/>
    </location>
    <ligand>
        <name>Ca(2+)</name>
        <dbReference type="ChEBI" id="CHEBI:29108"/>
    </ligand>
</feature>
<feature type="binding site" evidence="1">
    <location>
        <position position="238"/>
    </location>
    <ligand>
        <name>Ca(2+)</name>
        <dbReference type="ChEBI" id="CHEBI:29108"/>
    </ligand>
</feature>
<sequence>MVSYSNNHFAYAFLLLLTIGNTLAFSSSLPDHVQDPNLVVDDVNRSVFNASRRSLAYLSCRTGNPIDDCWRCDPNWETNRQRLADCAIGFGKNAIGGRKGRIYVVTDPANDDPVNPRPGTLRYAVTQEEPLWIIFKRDMVIRLKKELIITSFKTIDGRGSSVHITDGPCLKIHYATNIIIHGINIHDCKPGSGGMIKDGPHHTGWWMQSDGDAVAIFGGKHVWIDHCSLSNCDDGLIDAIHGSTAITISNNHMTHHDKVMLLGHSDSYTQDKNMQVTIAFNHFGEGLVQRMPRCRHGYFHVVNNDYTHWEMYAIGGSASPTIYSQGNRFLAPNTRFNKEVTKHEDAPESKWRDWNWRSEGDMLLNGAYFRESGAEAPSTYARASSLSARPSSLVGSITTTAGTLSCRRGRRC</sequence>
<name>PLY11_ARATH</name>
<organism>
    <name type="scientific">Arabidopsis thaliana</name>
    <name type="common">Mouse-ear cress</name>
    <dbReference type="NCBI Taxonomy" id="3702"/>
    <lineage>
        <taxon>Eukaryota</taxon>
        <taxon>Viridiplantae</taxon>
        <taxon>Streptophyta</taxon>
        <taxon>Embryophyta</taxon>
        <taxon>Tracheophyta</taxon>
        <taxon>Spermatophyta</taxon>
        <taxon>Magnoliopsida</taxon>
        <taxon>eudicotyledons</taxon>
        <taxon>Gunneridae</taxon>
        <taxon>Pentapetalae</taxon>
        <taxon>rosids</taxon>
        <taxon>malvids</taxon>
        <taxon>Brassicales</taxon>
        <taxon>Brassicaceae</taxon>
        <taxon>Camelineae</taxon>
        <taxon>Arabidopsis</taxon>
    </lineage>
</organism>